<protein>
    <recommendedName>
        <fullName>NAD(P)H-dependent D-xylose reductase</fullName>
        <shortName>XR</shortName>
        <ecNumber>1.1.1.307</ecNumber>
    </recommendedName>
</protein>
<comment type="function">
    <text evidence="1">Reduces D-xylose into xylitol. Has a preference for NADPH, but can also utilize NADH as cosubstrate (By similarity).</text>
</comment>
<comment type="catalytic activity">
    <reaction>
        <text>xylitol + NAD(+) = D-xylose + NADH + H(+)</text>
        <dbReference type="Rhea" id="RHEA:27441"/>
        <dbReference type="ChEBI" id="CHEBI:15378"/>
        <dbReference type="ChEBI" id="CHEBI:17151"/>
        <dbReference type="ChEBI" id="CHEBI:53455"/>
        <dbReference type="ChEBI" id="CHEBI:57540"/>
        <dbReference type="ChEBI" id="CHEBI:57945"/>
        <dbReference type="EC" id="1.1.1.307"/>
    </reaction>
</comment>
<comment type="catalytic activity">
    <reaction>
        <text>xylitol + NADP(+) = D-xylose + NADPH + H(+)</text>
        <dbReference type="Rhea" id="RHEA:27445"/>
        <dbReference type="ChEBI" id="CHEBI:15378"/>
        <dbReference type="ChEBI" id="CHEBI:17151"/>
        <dbReference type="ChEBI" id="CHEBI:53455"/>
        <dbReference type="ChEBI" id="CHEBI:57783"/>
        <dbReference type="ChEBI" id="CHEBI:58349"/>
        <dbReference type="EC" id="1.1.1.307"/>
    </reaction>
</comment>
<comment type="pathway">
    <text>Carbohydrate metabolism; D-xylose degradation.</text>
</comment>
<comment type="similarity">
    <text evidence="2">Belongs to the aldo/keto reductase family.</text>
</comment>
<proteinExistence type="evidence at protein level"/>
<dbReference type="EC" id="1.1.1.307"/>
<dbReference type="EMBL" id="U40706">
    <property type="protein sequence ID" value="AAC49526.1"/>
    <property type="molecule type" value="mRNA"/>
</dbReference>
<dbReference type="SMR" id="P78736"/>
<dbReference type="UniPathway" id="UPA00810"/>
<dbReference type="GO" id="GO:0032866">
    <property type="term" value="F:D-xylose reductase (NADPH) activity"/>
    <property type="evidence" value="ECO:0007669"/>
    <property type="project" value="InterPro"/>
</dbReference>
<dbReference type="GO" id="GO:0042843">
    <property type="term" value="P:D-xylose catabolic process"/>
    <property type="evidence" value="ECO:0007669"/>
    <property type="project" value="UniProtKB-UniPathway"/>
</dbReference>
<dbReference type="CDD" id="cd19113">
    <property type="entry name" value="AKR_AKR2B1-10"/>
    <property type="match status" value="1"/>
</dbReference>
<dbReference type="FunFam" id="3.20.20.100:FF:000007">
    <property type="entry name" value="NAD(P)H-dependent D-xylose reductase xyl1"/>
    <property type="match status" value="1"/>
</dbReference>
<dbReference type="Gene3D" id="3.20.20.100">
    <property type="entry name" value="NADP-dependent oxidoreductase domain"/>
    <property type="match status" value="1"/>
</dbReference>
<dbReference type="InterPro" id="IPR020471">
    <property type="entry name" value="AKR"/>
</dbReference>
<dbReference type="InterPro" id="IPR044486">
    <property type="entry name" value="AKR2B1"/>
</dbReference>
<dbReference type="InterPro" id="IPR018170">
    <property type="entry name" value="Aldo/ket_reductase_CS"/>
</dbReference>
<dbReference type="InterPro" id="IPR023210">
    <property type="entry name" value="NADP_OxRdtase_dom"/>
</dbReference>
<dbReference type="InterPro" id="IPR036812">
    <property type="entry name" value="NADP_OxRdtase_dom_sf"/>
</dbReference>
<dbReference type="PANTHER" id="PTHR11732">
    <property type="entry name" value="ALDO/KETO REDUCTASE"/>
    <property type="match status" value="1"/>
</dbReference>
<dbReference type="Pfam" id="PF00248">
    <property type="entry name" value="Aldo_ket_red"/>
    <property type="match status" value="1"/>
</dbReference>
<dbReference type="PIRSF" id="PIRSF000097">
    <property type="entry name" value="AKR"/>
    <property type="match status" value="1"/>
</dbReference>
<dbReference type="PRINTS" id="PR00069">
    <property type="entry name" value="ALDKETRDTASE"/>
</dbReference>
<dbReference type="SUPFAM" id="SSF51430">
    <property type="entry name" value="NAD(P)-linked oxidoreductase"/>
    <property type="match status" value="1"/>
</dbReference>
<dbReference type="PROSITE" id="PS00798">
    <property type="entry name" value="ALDOKETO_REDUCTASE_1"/>
    <property type="match status" value="1"/>
</dbReference>
<gene>
    <name type="primary">XYL1</name>
</gene>
<accession>P78736</accession>
<feature type="chain" id="PRO_0000124665" description="NAD(P)H-dependent D-xylose reductase">
    <location>
        <begin position="1"/>
        <end position="318"/>
    </location>
</feature>
<feature type="active site" description="Proton donor" evidence="1">
    <location>
        <position position="48"/>
    </location>
</feature>
<feature type="binding site" evidence="1">
    <location>
        <position position="110"/>
    </location>
    <ligand>
        <name>substrate</name>
    </ligand>
</feature>
<feature type="binding site" evidence="1">
    <location>
        <begin position="165"/>
        <end position="166"/>
    </location>
    <ligand>
        <name>NAD(+)</name>
        <dbReference type="ChEBI" id="CHEBI:57540"/>
    </ligand>
</feature>
<feature type="binding site" evidence="1">
    <location>
        <begin position="214"/>
        <end position="223"/>
    </location>
    <ligand>
        <name>NAD(+)</name>
        <dbReference type="ChEBI" id="CHEBI:57540"/>
    </ligand>
</feature>
<feature type="binding site" evidence="1">
    <location>
        <begin position="270"/>
        <end position="280"/>
    </location>
    <ligand>
        <name>NAD(+)</name>
        <dbReference type="ChEBI" id="CHEBI:57540"/>
    </ligand>
</feature>
<feature type="site" description="Lowers pKa of active site Tyr" evidence="1">
    <location>
        <position position="77"/>
    </location>
</feature>
<keyword id="KW-0119">Carbohydrate metabolism</keyword>
<keyword id="KW-0903">Direct protein sequencing</keyword>
<keyword id="KW-0520">NAD</keyword>
<keyword id="KW-0521">NADP</keyword>
<keyword id="KW-0560">Oxidoreductase</keyword>
<keyword id="KW-0859">Xylose metabolism</keyword>
<evidence type="ECO:0000250" key="1"/>
<evidence type="ECO:0000305" key="2"/>
<reference key="1">
    <citation type="journal article" date="1996" name="Yeast">
        <title>Sequence and analysis of an aldose (xylose) reductase gene from the xylose-fermenting yeast Pachysolen tannophilus.</title>
        <authorList>
            <person name="Bolen P.L."/>
            <person name="Hayman G."/>
            <person name="Shepherd H.S."/>
        </authorList>
    </citation>
    <scope>NUCLEOTIDE SEQUENCE [MRNA]</scope>
    <source>
        <strain>ATCC 32691 / BCRC 20329 / CBS 4044 / DSM 70352 / NBRC 1007 / NRRL Y-2460</strain>
    </source>
</reference>
<reference key="2">
    <citation type="journal article" date="1985" name="Biotechnol. Bioeng. Symp.">
        <title>Aldose reductase in the yeast Pachysolen tannophilus: purification, characterization and N-terminal sequence.</title>
        <authorList>
            <person name="Bolen P.L."/>
            <person name="Bietz J.A."/>
            <person name="Detroy R.W."/>
        </authorList>
    </citation>
    <scope>PROTEIN SEQUENCE OF 1-62</scope>
</reference>
<sequence>MTLQYYTLNNGRKIPAIGMGCWKLENAADMVYAAIKEGYRLFDCACDYGNEKEVGEGINRAIKDGLVKRKDLFITSKLWNNFHAKENVKKALMKSLSDFNLDYFDLYLMHFPISFKFVPFEEKYPPGFYCGDGDKFIYEDVPIIETWRAMENLVDEGLVKSIGVSNVSGGLLEDLIKAARIKPASLQIEHHPYLQQNKLVEYAQLKGIVVTGYSNFGPLSFLELGNETAKKTQPLYENKTITTIAAKHGKTPFQVLLRWVNQRGIAIIPKSTFPNTLAVNLHVDEFDLTKEDFEEIAKLDRHLRFNDPWTWDKIPTFV</sequence>
<organism>
    <name type="scientific">Pachysolen tannophilus</name>
    <name type="common">Yeast</name>
    <dbReference type="NCBI Taxonomy" id="4918"/>
    <lineage>
        <taxon>Eukaryota</taxon>
        <taxon>Fungi</taxon>
        <taxon>Dikarya</taxon>
        <taxon>Ascomycota</taxon>
        <taxon>Saccharomycotina</taxon>
        <taxon>Pichiomycetes</taxon>
        <taxon>Pachysolenaceae</taxon>
        <taxon>Pachysolen</taxon>
    </lineage>
</organism>
<name>XYL1_PACTA</name>